<dbReference type="EC" id="2.7.1.68" evidence="4"/>
<dbReference type="EMBL" id="AL844501">
    <property type="protein sequence ID" value="CAD49063.1"/>
    <property type="molecule type" value="Genomic_DNA"/>
</dbReference>
<dbReference type="RefSeq" id="XP_001351035.1">
    <property type="nucleotide sequence ID" value="XM_001350999.1"/>
</dbReference>
<dbReference type="SMR" id="Q8I239"/>
<dbReference type="FunCoup" id="Q8I239">
    <property type="interactions" value="36"/>
</dbReference>
<dbReference type="IntAct" id="Q8I239">
    <property type="interactions" value="4"/>
</dbReference>
<dbReference type="STRING" id="36329.Q8I239"/>
<dbReference type="PaxDb" id="5833-PFA0515w"/>
<dbReference type="EnsemblProtists" id="CAD49063">
    <property type="protein sequence ID" value="CAD49063"/>
    <property type="gene ID" value="PF3D7_0110600"/>
</dbReference>
<dbReference type="GeneID" id="813240"/>
<dbReference type="KEGG" id="pfa:PF3D7_0110600"/>
<dbReference type="VEuPathDB" id="PlasmoDB:PF3D7_0110600"/>
<dbReference type="HOGENOM" id="CLU_248349_0_0_1"/>
<dbReference type="InParanoid" id="Q8I239"/>
<dbReference type="OMA" id="RMNLKCY"/>
<dbReference type="OrthoDB" id="2129491at2759"/>
<dbReference type="PhylomeDB" id="Q8I239"/>
<dbReference type="Reactome" id="R-PFA-1660499">
    <property type="pathway name" value="Synthesis of PIPs at the plasma membrane"/>
</dbReference>
<dbReference type="Reactome" id="R-PFA-6811555">
    <property type="pathway name" value="PI5P Regulates TP53 Acetylation"/>
</dbReference>
<dbReference type="Reactome" id="R-PFA-6811558">
    <property type="pathway name" value="PI5P, PP2A and IER3 Regulate PI3K/AKT Signaling"/>
</dbReference>
<dbReference type="Reactome" id="R-PFA-8847453">
    <property type="pathway name" value="Synthesis of PIPs in the nucleus"/>
</dbReference>
<dbReference type="Reactome" id="R-PFA-8856828">
    <property type="pathway name" value="Clathrin-mediated endocytosis"/>
</dbReference>
<dbReference type="Proteomes" id="UP000001450">
    <property type="component" value="Chromosome 1"/>
</dbReference>
<dbReference type="GO" id="GO:0005886">
    <property type="term" value="C:plasma membrane"/>
    <property type="evidence" value="ECO:0000318"/>
    <property type="project" value="GO_Central"/>
</dbReference>
<dbReference type="GO" id="GO:0016308">
    <property type="term" value="F:1-phosphatidylinositol-4-phosphate 5-kinase activity"/>
    <property type="evidence" value="ECO:0000314"/>
    <property type="project" value="GeneDB"/>
</dbReference>
<dbReference type="GO" id="GO:0005524">
    <property type="term" value="F:ATP binding"/>
    <property type="evidence" value="ECO:0007669"/>
    <property type="project" value="UniProtKB-KW"/>
</dbReference>
<dbReference type="GO" id="GO:0005509">
    <property type="term" value="F:calcium ion binding"/>
    <property type="evidence" value="ECO:0007669"/>
    <property type="project" value="InterPro"/>
</dbReference>
<dbReference type="GO" id="GO:0046854">
    <property type="term" value="P:phosphatidylinositol phosphate biosynthetic process"/>
    <property type="evidence" value="ECO:0000318"/>
    <property type="project" value="GO_Central"/>
</dbReference>
<dbReference type="CDD" id="cd00139">
    <property type="entry name" value="PIPKc"/>
    <property type="match status" value="1"/>
</dbReference>
<dbReference type="Gene3D" id="3.30.810.10">
    <property type="entry name" value="2-Layer Sandwich"/>
    <property type="match status" value="1"/>
</dbReference>
<dbReference type="Gene3D" id="1.10.238.10">
    <property type="entry name" value="EF-hand"/>
    <property type="match status" value="1"/>
</dbReference>
<dbReference type="Gene3D" id="3.30.800.10">
    <property type="entry name" value="Phosphatidylinositol Phosphate Kinase II Beta"/>
    <property type="match status" value="1"/>
</dbReference>
<dbReference type="InterPro" id="IPR011992">
    <property type="entry name" value="EF-hand-dom_pair"/>
</dbReference>
<dbReference type="InterPro" id="IPR018247">
    <property type="entry name" value="EF_Hand_1_Ca_BS"/>
</dbReference>
<dbReference type="InterPro" id="IPR002048">
    <property type="entry name" value="EF_hand_dom"/>
</dbReference>
<dbReference type="InterPro" id="IPR027483">
    <property type="entry name" value="PInositol-4-P-4/5-kinase_C_sf"/>
</dbReference>
<dbReference type="InterPro" id="IPR002498">
    <property type="entry name" value="PInositol-4-P-4/5-kinase_core"/>
</dbReference>
<dbReference type="InterPro" id="IPR027484">
    <property type="entry name" value="PInositol-4-P-5-kinase_N"/>
</dbReference>
<dbReference type="InterPro" id="IPR023610">
    <property type="entry name" value="PInositol-4/5-P-5/4-kinase"/>
</dbReference>
<dbReference type="PANTHER" id="PTHR23086:SF8">
    <property type="entry name" value="PHOSPHATIDYLINOSITOL 5-PHOSPHATE 4-KINASE, ISOFORM A"/>
    <property type="match status" value="1"/>
</dbReference>
<dbReference type="PANTHER" id="PTHR23086">
    <property type="entry name" value="PHOSPHATIDYLINOSITOL-4-PHOSPHATE 5-KINASE"/>
    <property type="match status" value="1"/>
</dbReference>
<dbReference type="Pfam" id="PF01504">
    <property type="entry name" value="PIP5K"/>
    <property type="match status" value="1"/>
</dbReference>
<dbReference type="SMART" id="SM00330">
    <property type="entry name" value="PIPKc"/>
    <property type="match status" value="1"/>
</dbReference>
<dbReference type="SUPFAM" id="SSF47473">
    <property type="entry name" value="EF-hand"/>
    <property type="match status" value="1"/>
</dbReference>
<dbReference type="SUPFAM" id="SSF56104">
    <property type="entry name" value="SAICAR synthase-like"/>
    <property type="match status" value="1"/>
</dbReference>
<dbReference type="PROSITE" id="PS00018">
    <property type="entry name" value="EF_HAND_1"/>
    <property type="match status" value="1"/>
</dbReference>
<dbReference type="PROSITE" id="PS50222">
    <property type="entry name" value="EF_HAND_2"/>
    <property type="match status" value="1"/>
</dbReference>
<dbReference type="PROSITE" id="PS51455">
    <property type="entry name" value="PIPK"/>
    <property type="match status" value="1"/>
</dbReference>
<proteinExistence type="evidence at protein level"/>
<feature type="chain" id="PRO_0000456355" description="Phosphatidylinositol 4-phosphate 5-kinase">
    <location>
        <begin position="1"/>
        <end position="1710"/>
    </location>
</feature>
<feature type="domain" description="EF-hand" evidence="1">
    <location>
        <begin position="68"/>
        <end position="98"/>
    </location>
</feature>
<feature type="domain" description="PIPK" evidence="2">
    <location>
        <begin position="1334"/>
        <end position="1709"/>
    </location>
</feature>
<feature type="region of interest" description="Disordered" evidence="3">
    <location>
        <begin position="139"/>
        <end position="255"/>
    </location>
</feature>
<feature type="region of interest" description="Disordered" evidence="3">
    <location>
        <begin position="427"/>
        <end position="479"/>
    </location>
</feature>
<feature type="region of interest" description="Disordered" evidence="3">
    <location>
        <begin position="895"/>
        <end position="993"/>
    </location>
</feature>
<feature type="compositionally biased region" description="Low complexity" evidence="3">
    <location>
        <begin position="140"/>
        <end position="235"/>
    </location>
</feature>
<feature type="compositionally biased region" description="Polar residues" evidence="3">
    <location>
        <begin position="236"/>
        <end position="248"/>
    </location>
</feature>
<feature type="compositionally biased region" description="Basic residues" evidence="3">
    <location>
        <begin position="427"/>
        <end position="444"/>
    </location>
</feature>
<feature type="compositionally biased region" description="Low complexity" evidence="3">
    <location>
        <begin position="456"/>
        <end position="468"/>
    </location>
</feature>
<feature type="compositionally biased region" description="Acidic residues" evidence="3">
    <location>
        <begin position="902"/>
        <end position="973"/>
    </location>
</feature>
<feature type="compositionally biased region" description="Basic and acidic residues" evidence="3">
    <location>
        <begin position="974"/>
        <end position="987"/>
    </location>
</feature>
<feature type="binding site" evidence="1">
    <location>
        <position position="76"/>
    </location>
    <ligand>
        <name>Ca(2+)</name>
        <dbReference type="ChEBI" id="CHEBI:29108"/>
    </ligand>
</feature>
<feature type="binding site" evidence="1">
    <location>
        <position position="78"/>
    </location>
    <ligand>
        <name>Ca(2+)</name>
        <dbReference type="ChEBI" id="CHEBI:29108"/>
    </ligand>
</feature>
<feature type="binding site" evidence="1">
    <location>
        <position position="80"/>
    </location>
    <ligand>
        <name>Ca(2+)</name>
        <dbReference type="ChEBI" id="CHEBI:29108"/>
    </ligand>
</feature>
<feature type="binding site" evidence="1">
    <location>
        <position position="82"/>
    </location>
    <ligand>
        <name>Ca(2+)</name>
        <dbReference type="ChEBI" id="CHEBI:29108"/>
    </ligand>
</feature>
<feature type="binding site" evidence="1">
    <location>
        <position position="87"/>
    </location>
    <ligand>
        <name>Ca(2+)</name>
        <dbReference type="ChEBI" id="CHEBI:29108"/>
    </ligand>
</feature>
<name>PI51N_PLAF7</name>
<gene>
    <name evidence="5" type="primary">PIP5K</name>
    <name evidence="5" type="synonym">PfPIP5K/NCS</name>
    <name evidence="7" type="ORF">PF3D7_0110600</name>
</gene>
<protein>
    <recommendedName>
        <fullName evidence="5">Phosphatidylinositol 4-phosphate 5-kinase</fullName>
        <ecNumber evidence="4">2.7.1.68</ecNumber>
    </recommendedName>
</protein>
<reference evidence="8" key="1">
    <citation type="journal article" date="2002" name="Nature">
        <title>Genome sequence of the human malaria parasite Plasmodium falciparum.</title>
        <authorList>
            <person name="Gardner M.J."/>
            <person name="Hall N."/>
            <person name="Fung E."/>
            <person name="White O."/>
            <person name="Berriman M."/>
            <person name="Hyman R.W."/>
            <person name="Carlton J.M."/>
            <person name="Pain A."/>
            <person name="Nelson K.E."/>
            <person name="Bowman S."/>
            <person name="Paulsen I.T."/>
            <person name="James K.D."/>
            <person name="Eisen J.A."/>
            <person name="Rutherford K.M."/>
            <person name="Salzberg S.L."/>
            <person name="Craig A."/>
            <person name="Kyes S."/>
            <person name="Chan M.-S."/>
            <person name="Nene V."/>
            <person name="Shallom S.J."/>
            <person name="Suh B."/>
            <person name="Peterson J."/>
            <person name="Angiuoli S."/>
            <person name="Pertea M."/>
            <person name="Allen J."/>
            <person name="Selengut J."/>
            <person name="Haft D."/>
            <person name="Mather M.W."/>
            <person name="Vaidya A.B."/>
            <person name="Martin D.M.A."/>
            <person name="Fairlamb A.H."/>
            <person name="Fraunholz M.J."/>
            <person name="Roos D.S."/>
            <person name="Ralph S.A."/>
            <person name="McFadden G.I."/>
            <person name="Cummings L.M."/>
            <person name="Subramanian G.M."/>
            <person name="Mungall C."/>
            <person name="Venter J.C."/>
            <person name="Carucci D.J."/>
            <person name="Hoffman S.L."/>
            <person name="Newbold C."/>
            <person name="Davis R.W."/>
            <person name="Fraser C.M."/>
            <person name="Barrell B.G."/>
        </authorList>
    </citation>
    <scope>NUCLEOTIDE SEQUENCE [LARGE SCALE GENOMIC DNA]</scope>
    <source>
        <strain evidence="8">3D7</strain>
    </source>
</reference>
<reference evidence="8" key="2">
    <citation type="journal article" date="2002" name="Nature">
        <title>Sequence of Plasmodium falciparum chromosomes 1, 3-9 and 13.</title>
        <authorList>
            <person name="Hall N."/>
            <person name="Pain A."/>
            <person name="Berriman M."/>
            <person name="Churcher C.M."/>
            <person name="Harris B."/>
            <person name="Harris D."/>
            <person name="Mungall K.L."/>
            <person name="Bowman S."/>
            <person name="Atkin R."/>
            <person name="Baker S."/>
            <person name="Barron A."/>
            <person name="Brooks K."/>
            <person name="Buckee C.O."/>
            <person name="Burrows C."/>
            <person name="Cherevach I."/>
            <person name="Chillingworth C."/>
            <person name="Chillingworth T."/>
            <person name="Christodoulou Z."/>
            <person name="Clark L."/>
            <person name="Clark R."/>
            <person name="Corton C."/>
            <person name="Cronin A."/>
            <person name="Davies R.M."/>
            <person name="Davis P."/>
            <person name="Dear P."/>
            <person name="Dearden F."/>
            <person name="Doggett J."/>
            <person name="Feltwell T."/>
            <person name="Goble A."/>
            <person name="Goodhead I."/>
            <person name="Gwilliam R."/>
            <person name="Hamlin N."/>
            <person name="Hance Z."/>
            <person name="Harper D."/>
            <person name="Hauser H."/>
            <person name="Hornsby T."/>
            <person name="Holroyd S."/>
            <person name="Horrocks P."/>
            <person name="Humphray S."/>
            <person name="Jagels K."/>
            <person name="James K.D."/>
            <person name="Johnson D."/>
            <person name="Kerhornou A."/>
            <person name="Knights A."/>
            <person name="Konfortov B."/>
            <person name="Kyes S."/>
            <person name="Larke N."/>
            <person name="Lawson D."/>
            <person name="Lennard N."/>
            <person name="Line A."/>
            <person name="Maddison M."/>
            <person name="Mclean J."/>
            <person name="Mooney P."/>
            <person name="Moule S."/>
            <person name="Murphy L."/>
            <person name="Oliver K."/>
            <person name="Ormond D."/>
            <person name="Price C."/>
            <person name="Quail M.A."/>
            <person name="Rabbinowitsch E."/>
            <person name="Rajandream M.A."/>
            <person name="Rutter S."/>
            <person name="Rutherford K.M."/>
            <person name="Sanders M."/>
            <person name="Simmonds M."/>
            <person name="Seeger K."/>
            <person name="Sharp S."/>
            <person name="Smith R."/>
            <person name="Squares R."/>
            <person name="Squares S."/>
            <person name="Stevens K."/>
            <person name="Taylor K."/>
            <person name="Tivey A."/>
            <person name="Unwin L."/>
            <person name="Whitehead S."/>
            <person name="Woodward J.R."/>
            <person name="Sulston J.E."/>
            <person name="Craig A."/>
            <person name="Newbold C."/>
            <person name="Barrell B.G."/>
        </authorList>
    </citation>
    <scope>NUCLEOTIDE SEQUENCE [LARGE SCALE GENOMIC DNA]</scope>
    <source>
        <strain evidence="8">3D7</strain>
    </source>
</reference>
<reference evidence="6" key="3">
    <citation type="journal article" date="2009" name="Int. J. Parasitol.">
        <title>A unique phosphatidylinositol 4-phosphate 5-kinase is activated by ADP-ribosylation factor in Plasmodium falciparum.</title>
        <authorList>
            <person name="Leber W."/>
            <person name="Skippen A."/>
            <person name="Fivelman Q.L."/>
            <person name="Bowyer P.W."/>
            <person name="Cockcroft S."/>
            <person name="Baker D.A."/>
        </authorList>
    </citation>
    <scope>FUNCTION</scope>
    <scope>CATALYTIC ACTIVITY</scope>
    <scope>ACTIVITY REGULATION</scope>
    <scope>DEVELOPMENTAL STAGE</scope>
</reference>
<keyword id="KW-0067">ATP-binding</keyword>
<keyword id="KW-0106">Calcium</keyword>
<keyword id="KW-0418">Kinase</keyword>
<keyword id="KW-0443">Lipid metabolism</keyword>
<keyword id="KW-0479">Metal-binding</keyword>
<keyword id="KW-0547">Nucleotide-binding</keyword>
<keyword id="KW-1185">Reference proteome</keyword>
<keyword id="KW-0808">Transferase</keyword>
<sequence length="1710" mass="200046">MKCTSVNIRNVLDISLKKKIKENTNLSDDEIIIIYKRFNYISSNGKLNYDNFEKSLGILGSIQNAYLYKSIFKAFDLNNDNYLDFYEFCVAINIMLKGNKKDKLKLSYRIVNAGFNSNEDACVHKSSCMVNKFNTKEDNNMNGDNINGDNNNNHNNINGDNNNNHNNINGDNNNNNHNNINGDNNNNHNNINGDNNNNNHNNINGDNNNNHNNINGDNNNNHNNSHNNNSHNNNNKAENSLGQPLNEKNINDPINKHRNSQSIIYNINDEYNEKIKKNKKQDYSNYITYENFEKIVLSINDIKRQLLGTGDEIITSQIKYTFRSLSILCDDGIYRMNFECYKKALKCNEFLKLLGIHTKVADVFLQHELLKRKDKNKTKNGTMRNRKKYKNDSNRIANHLIIKSFSESTNTRGSIINDSTSFLFLRKQKKKKKKKKKKKKKKEKKAILYERKSTFSSSMENKSQNKSQNKSHNKNIKSVSRILSRVNKLSSTELIPNECDHKPNEEVKSTSDVLTPIFFNNGDEKMNHDTDGNMVYHKNNVDDNLVDGDVVSQGKRCSFFSSCENKKNEENKSITFNDINSGNINTNSCIMNNMIVTKESNEEIINEEAQSSYIYNKNIFCSKYNTKKDKNEPLKCDLFECSFINNDKNIVRDEDSNHKNVRKTDDYFIIDDNNIFDNGPIIISKNKTNDRERKLLKTFSSSSLKKKSLLKNYNYHIKKKNKDPNVEDTNMLYHDDIKKEYDHKVTKNNKNTCNNNYYNNVSFNSSAYYEYHSDIDLIHFSNNLKKKKKKNVTSPRPSSKEYERKVTYHKECCSNERMKNIKVNESDLGMFCVNNDKTNIEDVKEKKACDVLNRGCIKEQVQCKISEFENDKGNEIYMQEFKKCIEKYKEYVNQGEGHLKDEEEEKNDDEEEGEDGEDDEEENDDDDDDEDGDDDEDGDDDNDDNDDNDDNDDNDDNDDNDDNDDNDDNDDNDEKSNIKIENKKDVPNIHNNNDDDGINCCTNLFKDDDTLSALEKNVTNNNLIKIMSAKYLYHKFLEYKDFMKNNTTLFSHFNKIYQHEDDKINTDNKDVLNYRPKHNNDINYYNIPCEDQIKSDEKKSLLNVEFGDDIIKKKFFISSVNSHYVMINNNLTKEQMLYLIRNILMSIEDYLKKEKNRDYNKIFFLFFSIFIYNTQNGGDQKEMHEDEKWDHTNINEDKNVEKNDDYKNLSNNENSVYYNTMLRESLWNKKKYIKLNIFKNIILVISIVRYFLHTITISQKYTSSYDSLDDSNMIKSMNSLKLNEINILLNRASEILEKYSLGSVENKKVYINKSNYYNSSKKGKLSVSLRQNKQKKTFHRILAVYFGHERWDLVMNMMIGIRISSIKKFSINDISNYFHHKDVIQLPTSNAQHKVIFKNYAPIIFKNIRNFYGIKSKEYLTSVGPEQVISNMVLGNLSTLSELLSEGKSGSLFYFTSNGKYIIKTVCRNIHNLSKKLLPKYYEHIKKNPDSLLTRLYGIHSIKYQNNLGRKKKKIYFIVMNNFFSSIVEIHRRYDIKGSLVGRTVPETKREDHTIALKDVDIDELGDIINIGPENKERLLKVLKADADFLKENMLLDYSLLFGIHYRELSKDVVNWEETKTNQINHIYDYKGNCIASRPFHQCDYGGIISVDKKKIFFFGIIDIFTKWSIKKKFEHTFRTIQKFDGKNISCIHPNAYAKRFVTFIENHMK</sequence>
<comment type="function">
    <text evidence="4">Catalyzes the phosphorylation of phosphatidylinositol 4-phosphate (PtdIns(4)P/PI4P) to form phosphatidylinositol 4,5-bisphosphate (PtdIns(4,5)P2/PIP2), a lipid second messenger that regulates several cellular processes.</text>
</comment>
<comment type="catalytic activity">
    <reaction evidence="4">
        <text>a 1,2-diacyl-sn-glycero-3-phospho-(1D-myo-inositol 4-phosphate) + ATP = a 1,2-diacyl-sn-glycero-3-phospho-(1D-myo-inositol-4,5-bisphosphate) + ADP + H(+)</text>
        <dbReference type="Rhea" id="RHEA:14425"/>
        <dbReference type="ChEBI" id="CHEBI:15378"/>
        <dbReference type="ChEBI" id="CHEBI:30616"/>
        <dbReference type="ChEBI" id="CHEBI:58178"/>
        <dbReference type="ChEBI" id="CHEBI:58456"/>
        <dbReference type="ChEBI" id="CHEBI:456216"/>
        <dbReference type="EC" id="2.7.1.68"/>
    </reaction>
</comment>
<comment type="activity regulation">
    <text evidence="4">Catalytic activity is increase by myristoylated ARF1 (PubMed:19171150). Phosphatidic acid has no effect on catalytic activity (PubMed:19171150).</text>
</comment>
<comment type="developmental stage">
    <text evidence="4">Expressed during the asexual blood stage (at protein level) (PubMed:19171150). Expressed in gametocytes (at protein level) (PubMed:19171150).</text>
</comment>
<accession>Q8I239</accession>
<organism evidence="8">
    <name type="scientific">Plasmodium falciparum (isolate 3D7)</name>
    <dbReference type="NCBI Taxonomy" id="36329"/>
    <lineage>
        <taxon>Eukaryota</taxon>
        <taxon>Sar</taxon>
        <taxon>Alveolata</taxon>
        <taxon>Apicomplexa</taxon>
        <taxon>Aconoidasida</taxon>
        <taxon>Haemosporida</taxon>
        <taxon>Plasmodiidae</taxon>
        <taxon>Plasmodium</taxon>
        <taxon>Plasmodium (Laverania)</taxon>
    </lineage>
</organism>
<evidence type="ECO:0000255" key="1">
    <source>
        <dbReference type="PROSITE-ProRule" id="PRU00448"/>
    </source>
</evidence>
<evidence type="ECO:0000255" key="2">
    <source>
        <dbReference type="PROSITE-ProRule" id="PRU00781"/>
    </source>
</evidence>
<evidence type="ECO:0000256" key="3">
    <source>
        <dbReference type="SAM" id="MobiDB-lite"/>
    </source>
</evidence>
<evidence type="ECO:0000269" key="4">
    <source>
    </source>
</evidence>
<evidence type="ECO:0000303" key="5">
    <source>
    </source>
</evidence>
<evidence type="ECO:0000305" key="6"/>
<evidence type="ECO:0000312" key="7">
    <source>
        <dbReference type="EMBL" id="CAD49063.1"/>
    </source>
</evidence>
<evidence type="ECO:0000312" key="8">
    <source>
        <dbReference type="Proteomes" id="UP000001450"/>
    </source>
</evidence>